<accession>C3NGV2</accession>
<reference key="1">
    <citation type="journal article" date="2009" name="Proc. Natl. Acad. Sci. U.S.A.">
        <title>Biogeography of the Sulfolobus islandicus pan-genome.</title>
        <authorList>
            <person name="Reno M.L."/>
            <person name="Held N.L."/>
            <person name="Fields C.J."/>
            <person name="Burke P.V."/>
            <person name="Whitaker R.J."/>
        </authorList>
    </citation>
    <scope>NUCLEOTIDE SEQUENCE [LARGE SCALE GENOMIC DNA]</scope>
    <source>
        <strain>Y.N.15.51 / Yellowstone #2</strain>
    </source>
</reference>
<name>AATB_SACI1</name>
<protein>
    <recommendedName>
        <fullName evidence="1">A-type ATP synthase subunit B</fullName>
    </recommendedName>
</protein>
<feature type="chain" id="PRO_1000205046" description="A-type ATP synthase subunit B">
    <location>
        <begin position="1"/>
        <end position="463"/>
    </location>
</feature>
<comment type="function">
    <text evidence="1">Component of the A-type ATP synthase that produces ATP from ADP in the presence of a proton gradient across the membrane. The B chain is a regulatory subunit.</text>
</comment>
<comment type="subunit">
    <text evidence="1">Has multiple subunits with at least A(3), B(3), C, D, E, F, H, I and proteolipid K(x).</text>
</comment>
<comment type="subcellular location">
    <subcellularLocation>
        <location evidence="1">Cell membrane</location>
        <topology evidence="1">Peripheral membrane protein</topology>
    </subcellularLocation>
</comment>
<comment type="similarity">
    <text evidence="1">Belongs to the ATPase alpha/beta chains family.</text>
</comment>
<keyword id="KW-0066">ATP synthesis</keyword>
<keyword id="KW-1003">Cell membrane</keyword>
<keyword id="KW-0375">Hydrogen ion transport</keyword>
<keyword id="KW-0406">Ion transport</keyword>
<keyword id="KW-0472">Membrane</keyword>
<keyword id="KW-0813">Transport</keyword>
<sequence length="463" mass="51104">MLSVREFSNISMIKGPLIYVQGVTDASYNELVEIEMPNGEKRRGLVIDSQMGIAIVQVFEGTTGVSPTGTKIRMLGRGLEVKISEEMLGRIFNPLGDSLDNGPPVIKGEKRDINGSPLNPAAREYPEEFIQTGISAIDGLNALLRGQKLPIFSGSGLPANMLAAQIAKQATVRGEESNFAVVFAAIGARYDDALFFRKFFEETGAINRVAMIVSLANEPPVMKTLTPKTALTLAEYLAFEQDMHVLAILIDMTNYCEALREISAAREEVPGRGGYPGYMYTDLATIYERAGKVLGKKGSITQMPILTMPNDDITHPIPDLTGYITEGQIVLDRALYNKGIYPPINVLMSLSRLAKDGIGEGKTRDDHKDVSNQLFASYARAVDTRGLAAIIGEDSLSEVDRKYLLFGELFERKFVSQGFNENRDIETTLDIGWEILSVLPESELTNIKTQYIKKYHPNYRGKK</sequence>
<organism>
    <name type="scientific">Saccharolobus islandicus (strain Y.N.15.51 / Yellowstone #2)</name>
    <name type="common">Sulfolobus islandicus</name>
    <dbReference type="NCBI Taxonomy" id="419942"/>
    <lineage>
        <taxon>Archaea</taxon>
        <taxon>Thermoproteota</taxon>
        <taxon>Thermoprotei</taxon>
        <taxon>Sulfolobales</taxon>
        <taxon>Sulfolobaceae</taxon>
        <taxon>Saccharolobus</taxon>
    </lineage>
</organism>
<proteinExistence type="inferred from homology"/>
<dbReference type="EMBL" id="CP001404">
    <property type="protein sequence ID" value="ACP48362.1"/>
    <property type="molecule type" value="Genomic_DNA"/>
</dbReference>
<dbReference type="RefSeq" id="WP_012711558.1">
    <property type="nucleotide sequence ID" value="NC_012623.1"/>
</dbReference>
<dbReference type="SMR" id="C3NGV2"/>
<dbReference type="KEGG" id="sin:YN1551_1267"/>
<dbReference type="HOGENOM" id="CLU_022916_0_0_2"/>
<dbReference type="Proteomes" id="UP000006818">
    <property type="component" value="Chromosome"/>
</dbReference>
<dbReference type="GO" id="GO:0005886">
    <property type="term" value="C:plasma membrane"/>
    <property type="evidence" value="ECO:0007669"/>
    <property type="project" value="UniProtKB-SubCell"/>
</dbReference>
<dbReference type="GO" id="GO:0033178">
    <property type="term" value="C:proton-transporting two-sector ATPase complex, catalytic domain"/>
    <property type="evidence" value="ECO:0007669"/>
    <property type="project" value="InterPro"/>
</dbReference>
<dbReference type="GO" id="GO:0005524">
    <property type="term" value="F:ATP binding"/>
    <property type="evidence" value="ECO:0007669"/>
    <property type="project" value="UniProtKB-UniRule"/>
</dbReference>
<dbReference type="GO" id="GO:0046933">
    <property type="term" value="F:proton-transporting ATP synthase activity, rotational mechanism"/>
    <property type="evidence" value="ECO:0007669"/>
    <property type="project" value="UniProtKB-UniRule"/>
</dbReference>
<dbReference type="GO" id="GO:0046961">
    <property type="term" value="F:proton-transporting ATPase activity, rotational mechanism"/>
    <property type="evidence" value="ECO:0007669"/>
    <property type="project" value="TreeGrafter"/>
</dbReference>
<dbReference type="GO" id="GO:0042777">
    <property type="term" value="P:proton motive force-driven plasma membrane ATP synthesis"/>
    <property type="evidence" value="ECO:0007669"/>
    <property type="project" value="UniProtKB-UniRule"/>
</dbReference>
<dbReference type="CDD" id="cd18112">
    <property type="entry name" value="ATP-synt_V_A-type_beta_C"/>
    <property type="match status" value="1"/>
</dbReference>
<dbReference type="CDD" id="cd18118">
    <property type="entry name" value="ATP-synt_V_A-type_beta_N"/>
    <property type="match status" value="1"/>
</dbReference>
<dbReference type="CDD" id="cd01135">
    <property type="entry name" value="V_A-ATPase_B"/>
    <property type="match status" value="1"/>
</dbReference>
<dbReference type="Gene3D" id="3.40.50.12240">
    <property type="match status" value="1"/>
</dbReference>
<dbReference type="HAMAP" id="MF_00310">
    <property type="entry name" value="ATP_synth_B_arch"/>
    <property type="match status" value="1"/>
</dbReference>
<dbReference type="InterPro" id="IPR055190">
    <property type="entry name" value="ATP-synt_VA_C"/>
</dbReference>
<dbReference type="InterPro" id="IPR020003">
    <property type="entry name" value="ATPase_a/bsu_AS"/>
</dbReference>
<dbReference type="InterPro" id="IPR005724">
    <property type="entry name" value="ATPase_A1-cplx_bsu"/>
</dbReference>
<dbReference type="InterPro" id="IPR004100">
    <property type="entry name" value="ATPase_F1/V1/A1_a/bsu_N"/>
</dbReference>
<dbReference type="InterPro" id="IPR000194">
    <property type="entry name" value="ATPase_F1/V1/A1_a/bsu_nucl-bd"/>
</dbReference>
<dbReference type="InterPro" id="IPR027417">
    <property type="entry name" value="P-loop_NTPase"/>
</dbReference>
<dbReference type="InterPro" id="IPR022879">
    <property type="entry name" value="V-ATPase_su_B/beta"/>
</dbReference>
<dbReference type="NCBIfam" id="TIGR01041">
    <property type="entry name" value="ATP_syn_B_arch"/>
    <property type="match status" value="1"/>
</dbReference>
<dbReference type="NCBIfam" id="NF003235">
    <property type="entry name" value="PRK04196.1"/>
    <property type="match status" value="1"/>
</dbReference>
<dbReference type="PANTHER" id="PTHR43389">
    <property type="entry name" value="V-TYPE PROTON ATPASE SUBUNIT B"/>
    <property type="match status" value="1"/>
</dbReference>
<dbReference type="PANTHER" id="PTHR43389:SF4">
    <property type="entry name" value="V-TYPE PROTON ATPASE SUBUNIT B"/>
    <property type="match status" value="1"/>
</dbReference>
<dbReference type="Pfam" id="PF00006">
    <property type="entry name" value="ATP-synt_ab"/>
    <property type="match status" value="1"/>
</dbReference>
<dbReference type="Pfam" id="PF02874">
    <property type="entry name" value="ATP-synt_ab_N"/>
    <property type="match status" value="1"/>
</dbReference>
<dbReference type="Pfam" id="PF22919">
    <property type="entry name" value="ATP-synt_VA_C"/>
    <property type="match status" value="1"/>
</dbReference>
<dbReference type="PIRSF" id="PIRSF039114">
    <property type="entry name" value="V-ATPsynth_beta/V-ATPase_B"/>
    <property type="match status" value="1"/>
</dbReference>
<dbReference type="SUPFAM" id="SSF52540">
    <property type="entry name" value="P-loop containing nucleoside triphosphate hydrolases"/>
    <property type="match status" value="1"/>
</dbReference>
<dbReference type="PROSITE" id="PS00152">
    <property type="entry name" value="ATPASE_ALPHA_BETA"/>
    <property type="match status" value="1"/>
</dbReference>
<evidence type="ECO:0000255" key="1">
    <source>
        <dbReference type="HAMAP-Rule" id="MF_00310"/>
    </source>
</evidence>
<gene>
    <name evidence="1" type="primary">atpB</name>
    <name type="ordered locus">YN1551_1267</name>
</gene>